<keyword id="KW-0456">Lyase</keyword>
<gene>
    <name type="ordered locus">RHA1_ro03475</name>
</gene>
<reference key="1">
    <citation type="journal article" date="2006" name="Proc. Natl. Acad. Sci. U.S.A.">
        <title>The complete genome of Rhodococcus sp. RHA1 provides insights into a catabolic powerhouse.</title>
        <authorList>
            <person name="McLeod M.P."/>
            <person name="Warren R.L."/>
            <person name="Hsiao W.W.L."/>
            <person name="Araki N."/>
            <person name="Myhre M."/>
            <person name="Fernandes C."/>
            <person name="Miyazawa D."/>
            <person name="Wong W."/>
            <person name="Lillquist A.L."/>
            <person name="Wang D."/>
            <person name="Dosanjh M."/>
            <person name="Hara H."/>
            <person name="Petrescu A."/>
            <person name="Morin R.D."/>
            <person name="Yang G."/>
            <person name="Stott J.M."/>
            <person name="Schein J.E."/>
            <person name="Shin H."/>
            <person name="Smailus D."/>
            <person name="Siddiqui A.S."/>
            <person name="Marra M.A."/>
            <person name="Jones S.J.M."/>
            <person name="Holt R."/>
            <person name="Brinkman F.S.L."/>
            <person name="Miyauchi K."/>
            <person name="Fukuda M."/>
            <person name="Davies J.E."/>
            <person name="Mohn W.W."/>
            <person name="Eltis L.D."/>
        </authorList>
    </citation>
    <scope>NUCLEOTIDE SEQUENCE [LARGE SCALE GENOMIC DNA]</scope>
    <source>
        <strain>RHA1</strain>
    </source>
</reference>
<feature type="chain" id="PRO_0000379861" description="Putative hydro-lyase RHA1_ro03475">
    <location>
        <begin position="1"/>
        <end position="262"/>
    </location>
</feature>
<sequence>MTDSPADLRSAFRSGRVTPTAGLAPGFAQTNLIAVPQDWAYDVLLFTQRNPKPCPVLDVGDVGSRETVLAPGADITTDLPLYRVWKDGELADETADVSGLWRDDLVAFHIGCSFTFEHPVAAAGVPLRHVEQGSNVPMFVTNRECRPAGRMSGPMVVSMRPVPEHQVSLAAAISARMPAVHGGPVHIGDPTELGIADVAAPDFGDPVNFEPGDVPVFWACGVTPQAAVMASRLPFAITHAPGYMLITDIPDSEYVLEVPDAR</sequence>
<name>Y3475_RHOJR</name>
<protein>
    <recommendedName>
        <fullName evidence="1">Putative hydro-lyase RHA1_ro03475</fullName>
        <ecNumber evidence="1">4.2.1.-</ecNumber>
    </recommendedName>
</protein>
<evidence type="ECO:0000255" key="1">
    <source>
        <dbReference type="HAMAP-Rule" id="MF_01830"/>
    </source>
</evidence>
<proteinExistence type="inferred from homology"/>
<dbReference type="EC" id="4.2.1.-" evidence="1"/>
<dbReference type="EMBL" id="CP000431">
    <property type="protein sequence ID" value="ABG95278.1"/>
    <property type="molecule type" value="Genomic_DNA"/>
</dbReference>
<dbReference type="RefSeq" id="WP_011596101.1">
    <property type="nucleotide sequence ID" value="NC_008268.1"/>
</dbReference>
<dbReference type="SMR" id="Q0SB08"/>
<dbReference type="KEGG" id="rha:RHA1_ro03475"/>
<dbReference type="PATRIC" id="fig|101510.16.peg.3506"/>
<dbReference type="eggNOG" id="COG4336">
    <property type="taxonomic scope" value="Bacteria"/>
</dbReference>
<dbReference type="HOGENOM" id="CLU_059759_0_0_11"/>
<dbReference type="OrthoDB" id="149585at2"/>
<dbReference type="Proteomes" id="UP000008710">
    <property type="component" value="Chromosome"/>
</dbReference>
<dbReference type="GO" id="GO:0016829">
    <property type="term" value="F:lyase activity"/>
    <property type="evidence" value="ECO:0007669"/>
    <property type="project" value="UniProtKB-KW"/>
</dbReference>
<dbReference type="FunFam" id="3.30.2040.10:FF:000001">
    <property type="entry name" value="D-glutamate cyclase, mitochondrial"/>
    <property type="match status" value="1"/>
</dbReference>
<dbReference type="Gene3D" id="3.40.1640.10">
    <property type="entry name" value="PSTPO5379-like"/>
    <property type="match status" value="1"/>
</dbReference>
<dbReference type="Gene3D" id="3.30.2040.10">
    <property type="entry name" value="PSTPO5379-like domain"/>
    <property type="match status" value="1"/>
</dbReference>
<dbReference type="HAMAP" id="MF_01830">
    <property type="entry name" value="Hydro_lyase"/>
    <property type="match status" value="1"/>
</dbReference>
<dbReference type="InterPro" id="IPR009906">
    <property type="entry name" value="D-Glu_cyclase"/>
</dbReference>
<dbReference type="InterPro" id="IPR038021">
    <property type="entry name" value="Putative_hydro-lyase"/>
</dbReference>
<dbReference type="InterPro" id="IPR016938">
    <property type="entry name" value="UPF0317"/>
</dbReference>
<dbReference type="NCBIfam" id="NF003969">
    <property type="entry name" value="PRK05463.1"/>
    <property type="match status" value="1"/>
</dbReference>
<dbReference type="PANTHER" id="PTHR32022">
    <property type="entry name" value="D-GLUTAMATE CYCLASE, MITOCHONDRIAL"/>
    <property type="match status" value="1"/>
</dbReference>
<dbReference type="PANTHER" id="PTHR32022:SF10">
    <property type="entry name" value="D-GLUTAMATE CYCLASE, MITOCHONDRIAL"/>
    <property type="match status" value="1"/>
</dbReference>
<dbReference type="Pfam" id="PF07286">
    <property type="entry name" value="D-Glu_cyclase"/>
    <property type="match status" value="1"/>
</dbReference>
<dbReference type="PIRSF" id="PIRSF029755">
    <property type="entry name" value="UCP029755"/>
    <property type="match status" value="1"/>
</dbReference>
<dbReference type="SUPFAM" id="SSF160920">
    <property type="entry name" value="PSTPO5379-like"/>
    <property type="match status" value="1"/>
</dbReference>
<organism>
    <name type="scientific">Rhodococcus jostii (strain RHA1)</name>
    <dbReference type="NCBI Taxonomy" id="101510"/>
    <lineage>
        <taxon>Bacteria</taxon>
        <taxon>Bacillati</taxon>
        <taxon>Actinomycetota</taxon>
        <taxon>Actinomycetes</taxon>
        <taxon>Mycobacteriales</taxon>
        <taxon>Nocardiaceae</taxon>
        <taxon>Rhodococcus</taxon>
    </lineage>
</organism>
<comment type="similarity">
    <text evidence="1">Belongs to the D-glutamate cyclase family.</text>
</comment>
<accession>Q0SB08</accession>